<sequence>MTFSVVIVAAGSGTRAGPGQAKQWRVLAGRPVLRWSVEAFLAAGAAEVVVVTTADGEAFLPRMLEGLQGWRSTLGGATRALSVQAGLAALSERPGAEPVMIHDAARPFVSRNVILALLGALSDADLALPALAVADTLKRQPTGEAAQTVSREHLWRAQTPQAARRDTLIAAYAAWTHGEPTDDAQVVEAAGGRIALTAGDPLLTKLTYPEDFAMAEHLAGVARVTRVGQGFDAHRWGPGEEVWLCGVAIKHDETLVGHSDADAGLHALTDAILGAIGEGDIGDHFPPTDPKWKGAASDQFLKHAVDLVTAKGGALVNVDVTLICERPKIKPHRQAMRERLAEILSIPVDRVSVKATTTEKMGFTGRGEGLAASAVVAVETPA</sequence>
<keyword id="KW-0414">Isoprene biosynthesis</keyword>
<keyword id="KW-0456">Lyase</keyword>
<keyword id="KW-0479">Metal-binding</keyword>
<keyword id="KW-0511">Multifunctional enzyme</keyword>
<keyword id="KW-0548">Nucleotidyltransferase</keyword>
<keyword id="KW-1185">Reference proteome</keyword>
<keyword id="KW-0808">Transferase</keyword>
<gene>
    <name evidence="1" type="primary">ispDF</name>
    <name type="ordered locus">CCNA_01812</name>
</gene>
<accession>B8GW85</accession>
<name>ISPDF_CAUVN</name>
<reference key="1">
    <citation type="journal article" date="2010" name="J. Bacteriol.">
        <title>The genetic basis of laboratory adaptation in Caulobacter crescentus.</title>
        <authorList>
            <person name="Marks M.E."/>
            <person name="Castro-Rojas C.M."/>
            <person name="Teiling C."/>
            <person name="Du L."/>
            <person name="Kapatral V."/>
            <person name="Walunas T.L."/>
            <person name="Crosson S."/>
        </authorList>
    </citation>
    <scope>NUCLEOTIDE SEQUENCE [LARGE SCALE GENOMIC DNA]</scope>
    <source>
        <strain>NA1000 / CB15N</strain>
    </source>
</reference>
<evidence type="ECO:0000255" key="1">
    <source>
        <dbReference type="HAMAP-Rule" id="MF_01520"/>
    </source>
</evidence>
<protein>
    <recommendedName>
        <fullName evidence="1">Bifunctional enzyme IspD/IspF</fullName>
    </recommendedName>
    <domain>
        <recommendedName>
            <fullName evidence="1">2-C-methyl-D-erythritol 4-phosphate cytidylyltransferase</fullName>
            <ecNumber evidence="1">2.7.7.60</ecNumber>
        </recommendedName>
        <alternativeName>
            <fullName evidence="1">4-diphosphocytidyl-2C-methyl-D-erythritol synthase</fullName>
        </alternativeName>
        <alternativeName>
            <fullName evidence="1">MEP cytidylyltransferase</fullName>
            <shortName evidence="1">MCT</shortName>
        </alternativeName>
    </domain>
    <domain>
        <recommendedName>
            <fullName evidence="1">2-C-methyl-D-erythritol 2,4-cyclodiphosphate synthase</fullName>
            <shortName evidence="1">MECDP-synthase</shortName>
            <shortName evidence="1">MECPP-synthase</shortName>
            <shortName evidence="1">MECPS</shortName>
            <ecNumber evidence="1">4.6.1.12</ecNumber>
        </recommendedName>
    </domain>
</protein>
<organism>
    <name type="scientific">Caulobacter vibrioides (strain NA1000 / CB15N)</name>
    <name type="common">Caulobacter crescentus</name>
    <dbReference type="NCBI Taxonomy" id="565050"/>
    <lineage>
        <taxon>Bacteria</taxon>
        <taxon>Pseudomonadati</taxon>
        <taxon>Pseudomonadota</taxon>
        <taxon>Alphaproteobacteria</taxon>
        <taxon>Caulobacterales</taxon>
        <taxon>Caulobacteraceae</taxon>
        <taxon>Caulobacter</taxon>
    </lineage>
</organism>
<dbReference type="EC" id="2.7.7.60" evidence="1"/>
<dbReference type="EC" id="4.6.1.12" evidence="1"/>
<dbReference type="EMBL" id="CP001340">
    <property type="protein sequence ID" value="ACL95277.1"/>
    <property type="molecule type" value="Genomic_DNA"/>
</dbReference>
<dbReference type="RefSeq" id="WP_010919606.1">
    <property type="nucleotide sequence ID" value="NC_011916.1"/>
</dbReference>
<dbReference type="RefSeq" id="YP_002517185.1">
    <property type="nucleotide sequence ID" value="NC_011916.1"/>
</dbReference>
<dbReference type="SMR" id="B8GW85"/>
<dbReference type="GeneID" id="7331279"/>
<dbReference type="KEGG" id="ccs:CCNA_01812"/>
<dbReference type="PATRIC" id="fig|565050.3.peg.1781"/>
<dbReference type="HOGENOM" id="CLU_042800_0_2_5"/>
<dbReference type="OrthoDB" id="9804336at2"/>
<dbReference type="PhylomeDB" id="B8GW85"/>
<dbReference type="UniPathway" id="UPA00056">
    <property type="reaction ID" value="UER00093"/>
</dbReference>
<dbReference type="UniPathway" id="UPA00056">
    <property type="reaction ID" value="UER00095"/>
</dbReference>
<dbReference type="Proteomes" id="UP000001364">
    <property type="component" value="Chromosome"/>
</dbReference>
<dbReference type="GO" id="GO:0008685">
    <property type="term" value="F:2-C-methyl-D-erythritol 2,4-cyclodiphosphate synthase activity"/>
    <property type="evidence" value="ECO:0007669"/>
    <property type="project" value="UniProtKB-UniRule"/>
</dbReference>
<dbReference type="GO" id="GO:0050518">
    <property type="term" value="F:2-C-methyl-D-erythritol 4-phosphate cytidylyltransferase activity"/>
    <property type="evidence" value="ECO:0007669"/>
    <property type="project" value="UniProtKB-UniRule"/>
</dbReference>
<dbReference type="GO" id="GO:0046872">
    <property type="term" value="F:metal ion binding"/>
    <property type="evidence" value="ECO:0007669"/>
    <property type="project" value="UniProtKB-KW"/>
</dbReference>
<dbReference type="GO" id="GO:0019288">
    <property type="term" value="P:isopentenyl diphosphate biosynthetic process, methylerythritol 4-phosphate pathway"/>
    <property type="evidence" value="ECO:0007669"/>
    <property type="project" value="UniProtKB-UniRule"/>
</dbReference>
<dbReference type="GO" id="GO:0016114">
    <property type="term" value="P:terpenoid biosynthetic process"/>
    <property type="evidence" value="ECO:0007669"/>
    <property type="project" value="InterPro"/>
</dbReference>
<dbReference type="CDD" id="cd02516">
    <property type="entry name" value="CDP-ME_synthetase"/>
    <property type="match status" value="1"/>
</dbReference>
<dbReference type="CDD" id="cd00554">
    <property type="entry name" value="MECDP_synthase"/>
    <property type="match status" value="1"/>
</dbReference>
<dbReference type="FunFam" id="3.30.1330.50:FF:000003">
    <property type="entry name" value="2-C-methyl-D-erythritol 2,4-cyclodiphosphate synthase"/>
    <property type="match status" value="1"/>
</dbReference>
<dbReference type="Gene3D" id="3.30.1330.50">
    <property type="entry name" value="2-C-methyl-D-erythritol 2,4-cyclodiphosphate synthase"/>
    <property type="match status" value="1"/>
</dbReference>
<dbReference type="Gene3D" id="3.90.550.10">
    <property type="entry name" value="Spore Coat Polysaccharide Biosynthesis Protein SpsA, Chain A"/>
    <property type="match status" value="1"/>
</dbReference>
<dbReference type="HAMAP" id="MF_00108">
    <property type="entry name" value="IspD"/>
    <property type="match status" value="1"/>
</dbReference>
<dbReference type="HAMAP" id="MF_01520">
    <property type="entry name" value="IspDF"/>
    <property type="match status" value="1"/>
</dbReference>
<dbReference type="HAMAP" id="MF_00107">
    <property type="entry name" value="IspF"/>
    <property type="match status" value="1"/>
</dbReference>
<dbReference type="InterPro" id="IPR001228">
    <property type="entry name" value="IspD"/>
</dbReference>
<dbReference type="InterPro" id="IPR026596">
    <property type="entry name" value="IspD/F"/>
</dbReference>
<dbReference type="InterPro" id="IPR034683">
    <property type="entry name" value="IspD/TarI"/>
</dbReference>
<dbReference type="InterPro" id="IPR018294">
    <property type="entry name" value="ISPD_synthase_CS"/>
</dbReference>
<dbReference type="InterPro" id="IPR003526">
    <property type="entry name" value="MECDP_synthase"/>
</dbReference>
<dbReference type="InterPro" id="IPR020555">
    <property type="entry name" value="MECDP_synthase_CS"/>
</dbReference>
<dbReference type="InterPro" id="IPR036571">
    <property type="entry name" value="MECDP_synthase_sf"/>
</dbReference>
<dbReference type="InterPro" id="IPR029044">
    <property type="entry name" value="Nucleotide-diphossugar_trans"/>
</dbReference>
<dbReference type="NCBIfam" id="TIGR00453">
    <property type="entry name" value="ispD"/>
    <property type="match status" value="1"/>
</dbReference>
<dbReference type="NCBIfam" id="TIGR00151">
    <property type="entry name" value="ispF"/>
    <property type="match status" value="1"/>
</dbReference>
<dbReference type="NCBIfam" id="NF006899">
    <property type="entry name" value="PRK09382.1"/>
    <property type="match status" value="1"/>
</dbReference>
<dbReference type="PANTHER" id="PTHR43181">
    <property type="entry name" value="2-C-METHYL-D-ERYTHRITOL 2,4-CYCLODIPHOSPHATE SYNTHASE, CHLOROPLASTIC"/>
    <property type="match status" value="1"/>
</dbReference>
<dbReference type="PANTHER" id="PTHR43181:SF1">
    <property type="entry name" value="2-C-METHYL-D-ERYTHRITOL 2,4-CYCLODIPHOSPHATE SYNTHASE, CHLOROPLASTIC"/>
    <property type="match status" value="1"/>
</dbReference>
<dbReference type="Pfam" id="PF01128">
    <property type="entry name" value="IspD"/>
    <property type="match status" value="1"/>
</dbReference>
<dbReference type="Pfam" id="PF02542">
    <property type="entry name" value="YgbB"/>
    <property type="match status" value="1"/>
</dbReference>
<dbReference type="SUPFAM" id="SSF69765">
    <property type="entry name" value="IpsF-like"/>
    <property type="match status" value="1"/>
</dbReference>
<dbReference type="SUPFAM" id="SSF53448">
    <property type="entry name" value="Nucleotide-diphospho-sugar transferases"/>
    <property type="match status" value="1"/>
</dbReference>
<dbReference type="PROSITE" id="PS01295">
    <property type="entry name" value="ISPD"/>
    <property type="match status" value="1"/>
</dbReference>
<dbReference type="PROSITE" id="PS01350">
    <property type="entry name" value="ISPF"/>
    <property type="match status" value="1"/>
</dbReference>
<comment type="function">
    <text evidence="1">Bifunctional enzyme that catalyzes the formation of 4-diphosphocytidyl-2-C-methyl-D-erythritol from CTP and 2-C-methyl-D-erythritol 4-phosphate (MEP) (IspD), and catalyzes the conversion of 4-diphosphocytidyl-2-C-methyl-D-erythritol 2-phosphate (CDP-ME2P) to 2-C-methyl-D-erythritol 2,4-cyclodiphosphate (ME-CPP) with a corresponding release of cytidine 5-monophosphate (CMP) (IspF).</text>
</comment>
<comment type="catalytic activity">
    <reaction evidence="1">
        <text>2-C-methyl-D-erythritol 4-phosphate + CTP + H(+) = 4-CDP-2-C-methyl-D-erythritol + diphosphate</text>
        <dbReference type="Rhea" id="RHEA:13429"/>
        <dbReference type="ChEBI" id="CHEBI:15378"/>
        <dbReference type="ChEBI" id="CHEBI:33019"/>
        <dbReference type="ChEBI" id="CHEBI:37563"/>
        <dbReference type="ChEBI" id="CHEBI:57823"/>
        <dbReference type="ChEBI" id="CHEBI:58262"/>
        <dbReference type="EC" id="2.7.7.60"/>
    </reaction>
</comment>
<comment type="catalytic activity">
    <reaction evidence="1">
        <text>4-CDP-2-C-methyl-D-erythritol 2-phosphate = 2-C-methyl-D-erythritol 2,4-cyclic diphosphate + CMP</text>
        <dbReference type="Rhea" id="RHEA:23864"/>
        <dbReference type="ChEBI" id="CHEBI:57919"/>
        <dbReference type="ChEBI" id="CHEBI:58483"/>
        <dbReference type="ChEBI" id="CHEBI:60377"/>
        <dbReference type="EC" id="4.6.1.12"/>
    </reaction>
</comment>
<comment type="cofactor">
    <cofactor evidence="1">
        <name>a divalent metal cation</name>
        <dbReference type="ChEBI" id="CHEBI:60240"/>
    </cofactor>
</comment>
<comment type="pathway">
    <text evidence="1">Isoprenoid biosynthesis; isopentenyl diphosphate biosynthesis via DXP pathway; isopentenyl diphosphate from 1-deoxy-D-xylulose 5-phosphate: step 2/6.</text>
</comment>
<comment type="pathway">
    <text evidence="1">Isoprenoid biosynthesis; isopentenyl diphosphate biosynthesis via DXP pathway; isopentenyl diphosphate from 1-deoxy-D-xylulose 5-phosphate: step 4/6.</text>
</comment>
<comment type="similarity">
    <text evidence="1">In the N-terminal section; belongs to the IspD/TarI cytidylyltransferase family. IspD subfamily.</text>
</comment>
<comment type="similarity">
    <text evidence="1">In the C-terminal section; belongs to the IspF family.</text>
</comment>
<feature type="chain" id="PRO_1000185099" description="Bifunctional enzyme IspD/IspF">
    <location>
        <begin position="1"/>
        <end position="382"/>
    </location>
</feature>
<feature type="region of interest" description="2-C-methyl-D-erythritol 4-phosphate cytidylyltransferase" evidence="1">
    <location>
        <begin position="1"/>
        <end position="225"/>
    </location>
</feature>
<feature type="region of interest" description="2-C-methyl-D-erythritol 2,4-cyclodiphosphate synthase" evidence="1">
    <location>
        <begin position="226"/>
        <end position="382"/>
    </location>
</feature>
<feature type="binding site" evidence="1">
    <location>
        <begin position="232"/>
        <end position="234"/>
    </location>
    <ligand>
        <name>4-CDP-2-C-methyl-D-erythritol 2-phosphate</name>
        <dbReference type="ChEBI" id="CHEBI:57919"/>
    </ligand>
</feature>
<feature type="binding site" evidence="1">
    <location>
        <position position="232"/>
    </location>
    <ligand>
        <name>a divalent metal cation</name>
        <dbReference type="ChEBI" id="CHEBI:60240"/>
    </ligand>
</feature>
<feature type="binding site" evidence="1">
    <location>
        <position position="234"/>
    </location>
    <ligand>
        <name>a divalent metal cation</name>
        <dbReference type="ChEBI" id="CHEBI:60240"/>
    </ligand>
</feature>
<feature type="binding site" evidence="1">
    <location>
        <begin position="258"/>
        <end position="259"/>
    </location>
    <ligand>
        <name>4-CDP-2-C-methyl-D-erythritol 2-phosphate</name>
        <dbReference type="ChEBI" id="CHEBI:57919"/>
    </ligand>
</feature>
<feature type="binding site" evidence="1">
    <location>
        <position position="266"/>
    </location>
    <ligand>
        <name>a divalent metal cation</name>
        <dbReference type="ChEBI" id="CHEBI:60240"/>
    </ligand>
</feature>
<feature type="binding site" evidence="1">
    <location>
        <begin position="280"/>
        <end position="282"/>
    </location>
    <ligand>
        <name>4-CDP-2-C-methyl-D-erythritol 2-phosphate</name>
        <dbReference type="ChEBI" id="CHEBI:57919"/>
    </ligand>
</feature>
<feature type="binding site" evidence="1">
    <location>
        <begin position="356"/>
        <end position="359"/>
    </location>
    <ligand>
        <name>4-CDP-2-C-methyl-D-erythritol 2-phosphate</name>
        <dbReference type="ChEBI" id="CHEBI:57919"/>
    </ligand>
</feature>
<feature type="binding site" evidence="1">
    <location>
        <position position="363"/>
    </location>
    <ligand>
        <name>4-CDP-2-C-methyl-D-erythritol 2-phosphate</name>
        <dbReference type="ChEBI" id="CHEBI:57919"/>
    </ligand>
</feature>
<feature type="binding site" evidence="1">
    <location>
        <position position="366"/>
    </location>
    <ligand>
        <name>4-CDP-2-C-methyl-D-erythritol 2-phosphate</name>
        <dbReference type="ChEBI" id="CHEBI:57919"/>
    </ligand>
</feature>
<feature type="site" description="Transition state stabilizer" evidence="1">
    <location>
        <position position="15"/>
    </location>
</feature>
<feature type="site" description="Transition state stabilizer" evidence="1">
    <location>
        <position position="22"/>
    </location>
</feature>
<feature type="site" description="Positions MEP for the nucleophilic attack" evidence="1">
    <location>
        <position position="151"/>
    </location>
</feature>
<feature type="site" description="Positions MEP for the nucleophilic attack" evidence="1">
    <location>
        <position position="205"/>
    </location>
</feature>
<feature type="site" description="Transition state stabilizer" evidence="1">
    <location>
        <position position="258"/>
    </location>
</feature>
<feature type="site" description="Transition state stabilizer" evidence="1">
    <location>
        <position position="357"/>
    </location>
</feature>
<proteinExistence type="inferred from homology"/>